<sequence>MAENTASHRRKPRSLNDRHYSILQDLSAPPRQPPSSSHGEDEETKKSMIKLAGRRRLCKALPKEDEADGYDDPDLVDFYSPVKGETSLDSAGIGNKFTSWDESKEANTELAGEPNFSIITDFCSPSPQLKQKEEMQGDGGRNEIMGILDDLTSKLGTMSIQKKKDSQSNDFDACGVKSQVDKFDFEDAKSSFSLLSDLSKSSPDVVTTYNAGVNSIKDKQGKSGFAIREEQTSKEFSREWEERISNVGKQNSYSGRHFDDNSEDNRQGYNLDRGKSQCKEVDQSMKTTRHIEVSEKIRTVGRSNAAKLRDLDEDDDDDDCLILSGKKAAEMKINKPARSYNAKRHGYDERSLEDEGSITLTGLNLSYTLPGKIATMLYPHQREGLNWLWSLHTQGKGGILGDDMGLGKTMQICSFLAGLFHSKLIKRALVVAPKTLLPHWMKELATVGLSQMTREYYGTSTKAREYDLHHILQGKGILLTTYDIVRNNTKALQGDDHYTDEDDEDGNKWDYMILDEGHLIKNPNTQRAKSLLEIPSSHRIIISGTPIQNNLKELWALFNFSCPGLLGDKNWFKQNYEHYILRGTDKNATDREQRIGSTVAKNLREHIQPFFLRRLKSEVFGDDGATSKLSKKDEIVVWLRLTACQRQLYEAFLNSEIVLSAFDGSPLAALTILKKICDHPLLLTKRAAEDVLEGMDSTLTQEEAGVAERLAMHIADNVDTDDFQTKNDSISCKLSFIMSLLENLIPEGHRVLIFSQTRKMLNLIQDSLTSNGYSFLRIDGTTKAPDRLKTVEEFQEGHVAPIFLLTSQVGGLGLTLTKADRVIVVDPAWNPSTDNQSVDRAYRIGQTKDVIVYRLMTSATVEEKIYRKQVYKGGLFKTATEHKEQIRYFSQQDLRELFSLPKGGFDVSPTQQQLYEEHYNQIKLDEKLESHVKFLETLGIAGVSHHSLLFSKTAPIQAIQKDEEEQIRRETALLLGRASASISQDTVINGADYAFKPKDVNLDKRINISPVDDKELSESVIKARLNRLTMLLQNKGTVSRLPDGGAKIQKQIAELTRELKDMKAAERINMPQVIDLEEDISRKMQKGLNL</sequence>
<evidence type="ECO:0000250" key="1">
    <source>
        <dbReference type="UniProtKB" id="Q2NKX8"/>
    </source>
</evidence>
<evidence type="ECO:0000255" key="2"/>
<evidence type="ECO:0000255" key="3">
    <source>
        <dbReference type="PROSITE-ProRule" id="PRU00541"/>
    </source>
</evidence>
<evidence type="ECO:0000255" key="4">
    <source>
        <dbReference type="PROSITE-ProRule" id="PRU00542"/>
    </source>
</evidence>
<evidence type="ECO:0000255" key="5">
    <source>
        <dbReference type="PROSITE-ProRule" id="PRU00768"/>
    </source>
</evidence>
<evidence type="ECO:0000256" key="6">
    <source>
        <dbReference type="SAM" id="MobiDB-lite"/>
    </source>
</evidence>
<evidence type="ECO:0000269" key="7">
    <source>
    </source>
</evidence>
<evidence type="ECO:0000303" key="8">
    <source>
    </source>
</evidence>
<evidence type="ECO:0000305" key="9"/>
<evidence type="ECO:0000312" key="10">
    <source>
        <dbReference type="Araport" id="AT5G63950"/>
    </source>
</evidence>
<evidence type="ECO:0000312" key="11">
    <source>
        <dbReference type="EMBL" id="AAL58917.1"/>
    </source>
</evidence>
<evidence type="ECO:0000312" key="12">
    <source>
        <dbReference type="EMBL" id="BAA96898.1"/>
    </source>
</evidence>
<comment type="function">
    <text evidence="1 7 8">DNA helicase that acts as an essential component of the spindle assembly checkpoint (By similarity). Probable chromatin remodeling factor that regulate homologous recombination (HR) and non-homologous recombination (NHR).</text>
</comment>
<comment type="subcellular location">
    <subcellularLocation>
        <location evidence="5">Nucleus</location>
    </subcellularLocation>
</comment>
<comment type="similarity">
    <text evidence="9">Belongs to the SNF2/RAD54 helicase family.</text>
</comment>
<comment type="sequence caution">
    <conflict type="erroneous gene model prediction">
        <sequence resource="EMBL-CDS" id="BAA96898"/>
    </conflict>
</comment>
<feature type="chain" id="PRO_0000430858" description="Protein CHROMATIN REMODELING 24">
    <location>
        <begin position="1"/>
        <end position="1090"/>
    </location>
</feature>
<feature type="domain" description="Helicase ATP-binding" evidence="3">
    <location>
        <begin position="389"/>
        <end position="564"/>
    </location>
</feature>
<feature type="domain" description="Helicase C-terminal" evidence="4">
    <location>
        <begin position="736"/>
        <end position="895"/>
    </location>
</feature>
<feature type="region of interest" description="Disordered" evidence="6">
    <location>
        <begin position="1"/>
        <end position="51"/>
    </location>
</feature>
<feature type="region of interest" description="Disordered" evidence="6">
    <location>
        <begin position="247"/>
        <end position="273"/>
    </location>
</feature>
<feature type="coiled-coil region" evidence="2">
    <location>
        <begin position="1043"/>
        <end position="1069"/>
    </location>
</feature>
<feature type="short sequence motif" description="Nuclear localization signal" evidence="5">
    <location>
        <begin position="44"/>
        <end position="51"/>
    </location>
</feature>
<feature type="short sequence motif" description="DEAH box" evidence="3">
    <location>
        <begin position="515"/>
        <end position="518"/>
    </location>
</feature>
<feature type="compositionally biased region" description="Basic and acidic residues" evidence="6">
    <location>
        <begin position="256"/>
        <end position="273"/>
    </location>
</feature>
<feature type="binding site" evidence="3">
    <location>
        <begin position="402"/>
        <end position="409"/>
    </location>
    <ligand>
        <name>ATP</name>
        <dbReference type="ChEBI" id="CHEBI:30616"/>
    </ligand>
</feature>
<organism evidence="11">
    <name type="scientific">Arabidopsis thaliana</name>
    <name type="common">Mouse-ear cress</name>
    <dbReference type="NCBI Taxonomy" id="3702"/>
    <lineage>
        <taxon>Eukaryota</taxon>
        <taxon>Viridiplantae</taxon>
        <taxon>Streptophyta</taxon>
        <taxon>Embryophyta</taxon>
        <taxon>Tracheophyta</taxon>
        <taxon>Spermatophyta</taxon>
        <taxon>Magnoliopsida</taxon>
        <taxon>eudicotyledons</taxon>
        <taxon>Gunneridae</taxon>
        <taxon>Pentapetalae</taxon>
        <taxon>rosids</taxon>
        <taxon>malvids</taxon>
        <taxon>Brassicales</taxon>
        <taxon>Brassicaceae</taxon>
        <taxon>Camelineae</taxon>
        <taxon>Arabidopsis</taxon>
    </lineage>
</organism>
<name>CHR24_ARATH</name>
<dbReference type="EC" id="3.6.4.-"/>
<dbReference type="EMBL" id="AB019227">
    <property type="protein sequence ID" value="BAA96898.1"/>
    <property type="status" value="ALT_SEQ"/>
    <property type="molecule type" value="Genomic_DNA"/>
</dbReference>
<dbReference type="EMBL" id="CP002688">
    <property type="protein sequence ID" value="AED97819.1"/>
    <property type="molecule type" value="Genomic_DNA"/>
</dbReference>
<dbReference type="EMBL" id="AF462829">
    <property type="protein sequence ID" value="AAL58917.1"/>
    <property type="molecule type" value="mRNA"/>
</dbReference>
<dbReference type="EMBL" id="AY142010">
    <property type="protein sequence ID" value="AAM98274.1"/>
    <property type="molecule type" value="mRNA"/>
</dbReference>
<dbReference type="RefSeq" id="NP_201200.2">
    <property type="nucleotide sequence ID" value="NM_125791.3"/>
</dbReference>
<dbReference type="SMR" id="Q8W103"/>
<dbReference type="FunCoup" id="Q8W103">
    <property type="interactions" value="155"/>
</dbReference>
<dbReference type="STRING" id="3702.Q8W103"/>
<dbReference type="iPTMnet" id="Q8W103"/>
<dbReference type="PaxDb" id="3702-AT5G63950.1"/>
<dbReference type="ProteomicsDB" id="246961"/>
<dbReference type="EnsemblPlants" id="AT5G63950.1">
    <property type="protein sequence ID" value="AT5G63950.1"/>
    <property type="gene ID" value="AT5G63950"/>
</dbReference>
<dbReference type="GeneID" id="836516"/>
<dbReference type="Gramene" id="AT5G63950.1">
    <property type="protein sequence ID" value="AT5G63950.1"/>
    <property type="gene ID" value="AT5G63950"/>
</dbReference>
<dbReference type="KEGG" id="ath:AT5G63950"/>
<dbReference type="Araport" id="AT5G63950"/>
<dbReference type="TAIR" id="AT5G63950">
    <property type="gene designation" value="CHR24"/>
</dbReference>
<dbReference type="eggNOG" id="KOG0387">
    <property type="taxonomic scope" value="Eukaryota"/>
</dbReference>
<dbReference type="HOGENOM" id="CLU_000315_17_0_1"/>
<dbReference type="InParanoid" id="Q8W103"/>
<dbReference type="PhylomeDB" id="Q8W103"/>
<dbReference type="CD-CODE" id="4299E36E">
    <property type="entry name" value="Nucleolus"/>
</dbReference>
<dbReference type="PRO" id="PR:Q8W103"/>
<dbReference type="Proteomes" id="UP000006548">
    <property type="component" value="Chromosome 5"/>
</dbReference>
<dbReference type="ExpressionAtlas" id="Q8W103">
    <property type="expression patterns" value="baseline and differential"/>
</dbReference>
<dbReference type="GO" id="GO:0005634">
    <property type="term" value="C:nucleus"/>
    <property type="evidence" value="ECO:0007669"/>
    <property type="project" value="UniProtKB-SubCell"/>
</dbReference>
<dbReference type="GO" id="GO:0005524">
    <property type="term" value="F:ATP binding"/>
    <property type="evidence" value="ECO:0007669"/>
    <property type="project" value="UniProtKB-KW"/>
</dbReference>
<dbReference type="GO" id="GO:0003677">
    <property type="term" value="F:DNA binding"/>
    <property type="evidence" value="ECO:0007669"/>
    <property type="project" value="UniProtKB-KW"/>
</dbReference>
<dbReference type="GO" id="GO:0004386">
    <property type="term" value="F:helicase activity"/>
    <property type="evidence" value="ECO:0007669"/>
    <property type="project" value="UniProtKB-KW"/>
</dbReference>
<dbReference type="GO" id="GO:0016787">
    <property type="term" value="F:hydrolase activity"/>
    <property type="evidence" value="ECO:0007669"/>
    <property type="project" value="UniProtKB-KW"/>
</dbReference>
<dbReference type="GO" id="GO:0006310">
    <property type="term" value="P:DNA recombination"/>
    <property type="evidence" value="ECO:0007669"/>
    <property type="project" value="UniProtKB-KW"/>
</dbReference>
<dbReference type="GO" id="GO:0045951">
    <property type="term" value="P:positive regulation of mitotic recombination"/>
    <property type="evidence" value="ECO:0000314"/>
    <property type="project" value="UniProtKB"/>
</dbReference>
<dbReference type="CDD" id="cd18001">
    <property type="entry name" value="DEXHc_ERCC6L"/>
    <property type="match status" value="1"/>
</dbReference>
<dbReference type="CDD" id="cd18793">
    <property type="entry name" value="SF2_C_SNF"/>
    <property type="match status" value="1"/>
</dbReference>
<dbReference type="FunFam" id="3.40.50.10810:FF:000055">
    <property type="entry name" value="Protein CHROMATIN REMODELING 24"/>
    <property type="match status" value="1"/>
</dbReference>
<dbReference type="Gene3D" id="3.40.50.300">
    <property type="entry name" value="P-loop containing nucleotide triphosphate hydrolases"/>
    <property type="match status" value="1"/>
</dbReference>
<dbReference type="Gene3D" id="3.40.50.10810">
    <property type="entry name" value="Tandem AAA-ATPase domain"/>
    <property type="match status" value="1"/>
</dbReference>
<dbReference type="InterPro" id="IPR014001">
    <property type="entry name" value="Helicase_ATP-bd"/>
</dbReference>
<dbReference type="InterPro" id="IPR001650">
    <property type="entry name" value="Helicase_C-like"/>
</dbReference>
<dbReference type="InterPro" id="IPR027417">
    <property type="entry name" value="P-loop_NTPase"/>
</dbReference>
<dbReference type="InterPro" id="IPR038718">
    <property type="entry name" value="SNF2-like_sf"/>
</dbReference>
<dbReference type="InterPro" id="IPR049730">
    <property type="entry name" value="SNF2/RAD54-like_C"/>
</dbReference>
<dbReference type="InterPro" id="IPR000330">
    <property type="entry name" value="SNF2_N"/>
</dbReference>
<dbReference type="InterPro" id="IPR050496">
    <property type="entry name" value="SNF2_RAD54_helicase_repair"/>
</dbReference>
<dbReference type="PANTHER" id="PTHR45629:SF7">
    <property type="entry name" value="DNA EXCISION REPAIR PROTEIN ERCC-6-RELATED"/>
    <property type="match status" value="1"/>
</dbReference>
<dbReference type="PANTHER" id="PTHR45629">
    <property type="entry name" value="SNF2/RAD54 FAMILY MEMBER"/>
    <property type="match status" value="1"/>
</dbReference>
<dbReference type="Pfam" id="PF00271">
    <property type="entry name" value="Helicase_C"/>
    <property type="match status" value="1"/>
</dbReference>
<dbReference type="Pfam" id="PF00176">
    <property type="entry name" value="SNF2-rel_dom"/>
    <property type="match status" value="1"/>
</dbReference>
<dbReference type="SMART" id="SM00487">
    <property type="entry name" value="DEXDc"/>
    <property type="match status" value="1"/>
</dbReference>
<dbReference type="SMART" id="SM00490">
    <property type="entry name" value="HELICc"/>
    <property type="match status" value="1"/>
</dbReference>
<dbReference type="SUPFAM" id="SSF52540">
    <property type="entry name" value="P-loop containing nucleoside triphosphate hydrolases"/>
    <property type="match status" value="2"/>
</dbReference>
<dbReference type="PROSITE" id="PS51192">
    <property type="entry name" value="HELICASE_ATP_BIND_1"/>
    <property type="match status" value="1"/>
</dbReference>
<dbReference type="PROSITE" id="PS51194">
    <property type="entry name" value="HELICASE_CTER"/>
    <property type="match status" value="1"/>
</dbReference>
<proteinExistence type="evidence at transcript level"/>
<accession>Q8W103</accession>
<accession>Q9LVN8</accession>
<reference key="1">
    <citation type="journal article" date="2000" name="DNA Res.">
        <title>Structural analysis of Arabidopsis thaliana chromosome 5. X. Sequence features of the regions of 3,076,755 bp covered by sixty P1 and TAC clones.</title>
        <authorList>
            <person name="Sato S."/>
            <person name="Nakamura Y."/>
            <person name="Kaneko T."/>
            <person name="Katoh T."/>
            <person name="Asamizu E."/>
            <person name="Kotani H."/>
            <person name="Tabata S."/>
        </authorList>
    </citation>
    <scope>NUCLEOTIDE SEQUENCE [LARGE SCALE GENOMIC DNA]</scope>
    <source>
        <strain>cv. Columbia</strain>
    </source>
</reference>
<reference key="2">
    <citation type="journal article" date="2017" name="Plant J.">
        <title>Araport11: a complete reannotation of the Arabidopsis thaliana reference genome.</title>
        <authorList>
            <person name="Cheng C.Y."/>
            <person name="Krishnakumar V."/>
            <person name="Chan A.P."/>
            <person name="Thibaud-Nissen F."/>
            <person name="Schobel S."/>
            <person name="Town C.D."/>
        </authorList>
    </citation>
    <scope>GENOME REANNOTATION</scope>
    <source>
        <strain>cv. Columbia</strain>
    </source>
</reference>
<reference key="3">
    <citation type="journal article" date="2003" name="Science">
        <title>Empirical analysis of transcriptional activity in the Arabidopsis genome.</title>
        <authorList>
            <person name="Yamada K."/>
            <person name="Lim J."/>
            <person name="Dale J.M."/>
            <person name="Chen H."/>
            <person name="Shinn P."/>
            <person name="Palm C.J."/>
            <person name="Southwick A.M."/>
            <person name="Wu H.C."/>
            <person name="Kim C.J."/>
            <person name="Nguyen M."/>
            <person name="Pham P.K."/>
            <person name="Cheuk R.F."/>
            <person name="Karlin-Newmann G."/>
            <person name="Liu S.X."/>
            <person name="Lam B."/>
            <person name="Sakano H."/>
            <person name="Wu T."/>
            <person name="Yu G."/>
            <person name="Miranda M."/>
            <person name="Quach H.L."/>
            <person name="Tripp M."/>
            <person name="Chang C.H."/>
            <person name="Lee J.M."/>
            <person name="Toriumi M.J."/>
            <person name="Chan M.M."/>
            <person name="Tang C.C."/>
            <person name="Onodera C.S."/>
            <person name="Deng J.M."/>
            <person name="Akiyama K."/>
            <person name="Ansari Y."/>
            <person name="Arakawa T."/>
            <person name="Banh J."/>
            <person name="Banno F."/>
            <person name="Bowser L."/>
            <person name="Brooks S.Y."/>
            <person name="Carninci P."/>
            <person name="Chao Q."/>
            <person name="Choy N."/>
            <person name="Enju A."/>
            <person name="Goldsmith A.D."/>
            <person name="Gurjal M."/>
            <person name="Hansen N.F."/>
            <person name="Hayashizaki Y."/>
            <person name="Johnson-Hopson C."/>
            <person name="Hsuan V.W."/>
            <person name="Iida K."/>
            <person name="Karnes M."/>
            <person name="Khan S."/>
            <person name="Koesema E."/>
            <person name="Ishida J."/>
            <person name="Jiang P.X."/>
            <person name="Jones T."/>
            <person name="Kawai J."/>
            <person name="Kamiya A."/>
            <person name="Meyers C."/>
            <person name="Nakajima M."/>
            <person name="Narusaka M."/>
            <person name="Seki M."/>
            <person name="Sakurai T."/>
            <person name="Satou M."/>
            <person name="Tamse R."/>
            <person name="Vaysberg M."/>
            <person name="Wallender E.K."/>
            <person name="Wong C."/>
            <person name="Yamamura Y."/>
            <person name="Yuan S."/>
            <person name="Shinozaki K."/>
            <person name="Davis R.W."/>
            <person name="Theologis A."/>
            <person name="Ecker J.R."/>
        </authorList>
    </citation>
    <scope>NUCLEOTIDE SEQUENCE [LARGE SCALE MRNA]</scope>
    <source>
        <strain>cv. Columbia</strain>
    </source>
</reference>
<reference key="4">
    <citation type="journal article" date="2006" name="Genetics">
        <title>Involvement of the Arabidopsis SWI2/SNF2 chromatin remodeling gene family in DNA damage response and recombination.</title>
        <authorList>
            <person name="Shaked H."/>
            <person name="Avivi-Ragolsky N."/>
            <person name="Levy A.A."/>
        </authorList>
    </citation>
    <scope>GENE FAMILY</scope>
    <scope>NOMENCLATURE</scope>
</reference>
<reference key="5">
    <citation type="journal article" date="2011" name="Genet. Mol. Res.">
        <title>A transient assay for recombination demonstrates that Arabidopsis SNM1 and XRCC3 enhance non-homologous recombination.</title>
        <authorList>
            <person name="Johnson R.A."/>
            <person name="Hellens R.P."/>
            <person name="Love D.R."/>
        </authorList>
    </citation>
    <scope>FUNCTION</scope>
</reference>
<reference key="6">
    <citation type="journal article" date="2013" name="PLoS ONE">
        <title>Genome-wide comparative in silico analysis of the RNA helicase gene family in Zea mays and Glycine max: a comparison with Arabidopsis and Oryza sativa.</title>
        <authorList>
            <person name="Xu R."/>
            <person name="Zhang S."/>
            <person name="Huang J."/>
            <person name="Zheng C."/>
        </authorList>
    </citation>
    <scope>GENE FAMILY</scope>
</reference>
<protein>
    <recommendedName>
        <fullName evidence="8">Protein CHROMATIN REMODELING 24</fullName>
        <shortName>AtCHR24</shortName>
        <ecNumber>3.6.4.-</ecNumber>
    </recommendedName>
    <alternativeName>
        <fullName evidence="1">DNA excision repair protein CHR24</fullName>
    </alternativeName>
</protein>
<gene>
    <name evidence="8" type="primary">CHR24</name>
    <name evidence="10" type="ordered locus">At5g63950</name>
    <name evidence="12" type="ORF">MBM17.5</name>
</gene>
<keyword id="KW-0067">ATP-binding</keyword>
<keyword id="KW-0175">Coiled coil</keyword>
<keyword id="KW-0233">DNA recombination</keyword>
<keyword id="KW-0238">DNA-binding</keyword>
<keyword id="KW-0347">Helicase</keyword>
<keyword id="KW-0378">Hydrolase</keyword>
<keyword id="KW-0547">Nucleotide-binding</keyword>
<keyword id="KW-0539">Nucleus</keyword>
<keyword id="KW-1185">Reference proteome</keyword>